<comment type="interaction">
    <interactant intactId="EBI-2511609">
        <id>Q99666</id>
    </interactant>
    <interactant intactId="EBI-529989">
        <id>Q9NRI5</id>
        <label>DISC1</label>
    </interactant>
    <organismsDiffer>false</organismsDiffer>
    <experiments>3</experiments>
</comment>
<comment type="interaction">
    <interactant intactId="EBI-2511609">
        <id>Q99666</id>
    </interactant>
    <interactant intactId="EBI-286642">
        <id>P62826</id>
        <label>RAN</label>
    </interactant>
    <organismsDiffer>false</organismsDiffer>
    <experiments>4</experiments>
</comment>
<comment type="subcellular location">
    <subcellularLocation>
        <location evidence="5">Cytoplasm</location>
    </subcellularLocation>
</comment>
<comment type="alternative products">
    <event type="alternative splicing"/>
    <isoform>
        <id>Q99666-1</id>
        <name>1</name>
        <sequence type="displayed"/>
    </isoform>
    <isoform>
        <id>Q99666-2</id>
        <name>2</name>
        <sequence type="described" ref="VSP_038968 VSP_038969"/>
    </isoform>
</comment>
<comment type="tissue specificity">
    <text evidence="4">Expressed in testis.</text>
</comment>
<comment type="miscellaneous">
    <text>One of the 8 copies of RANBP2 clustered close to the chromosome 2 centromere.</text>
</comment>
<evidence type="ECO:0000255" key="1">
    <source>
        <dbReference type="PROSITE-ProRule" id="PRU00164"/>
    </source>
</evidence>
<evidence type="ECO:0000255" key="2">
    <source>
        <dbReference type="PROSITE-ProRule" id="PRU00250"/>
    </source>
</evidence>
<evidence type="ECO:0000256" key="3">
    <source>
        <dbReference type="SAM" id="MobiDB-lite"/>
    </source>
</evidence>
<evidence type="ECO:0000269" key="4">
    <source>
    </source>
</evidence>
<evidence type="ECO:0000269" key="5">
    <source>
    </source>
</evidence>
<evidence type="ECO:0000303" key="6">
    <source>
    </source>
</evidence>
<evidence type="ECO:0000305" key="7"/>
<evidence type="ECO:0007744" key="8">
    <source>
    </source>
</evidence>
<evidence type="ECO:0007744" key="9">
    <source>
    </source>
</evidence>
<proteinExistence type="evidence at protein level"/>
<name>RGPD5_HUMAN</name>
<organism>
    <name type="scientific">Homo sapiens</name>
    <name type="common">Human</name>
    <dbReference type="NCBI Taxonomy" id="9606"/>
    <lineage>
        <taxon>Eukaryota</taxon>
        <taxon>Metazoa</taxon>
        <taxon>Chordata</taxon>
        <taxon>Craniata</taxon>
        <taxon>Vertebrata</taxon>
        <taxon>Euteleostomi</taxon>
        <taxon>Mammalia</taxon>
        <taxon>Eutheria</taxon>
        <taxon>Euarchontoglires</taxon>
        <taxon>Primates</taxon>
        <taxon>Haplorrhini</taxon>
        <taxon>Catarrhini</taxon>
        <taxon>Hominidae</taxon>
        <taxon>Homo</taxon>
    </lineage>
</organism>
<gene>
    <name type="primary">RGPD5</name>
    <name type="synonym">RANBP2L1</name>
    <name type="synonym">RGP5</name>
    <name type="synonym">RGP7</name>
    <name type="synonym">RGPD7</name>
</gene>
<gene>
    <name type="primary">RGPD6</name>
    <name type="synonym">RANBP2L2</name>
    <name type="synonym">RGP6</name>
</gene>
<feature type="chain" id="PRO_0000204915" description="RANBP2-like and GRIP domain-containing protein 5/6">
    <location>
        <begin position="1"/>
        <end position="1765"/>
    </location>
</feature>
<feature type="repeat" description="TPR 1">
    <location>
        <begin position="26"/>
        <end position="59"/>
    </location>
</feature>
<feature type="repeat" description="TPR 2">
    <location>
        <begin position="60"/>
        <end position="93"/>
    </location>
</feature>
<feature type="repeat" description="TPR 3">
    <location>
        <begin position="648"/>
        <end position="681"/>
    </location>
</feature>
<feature type="domain" description="RanBD1 1" evidence="1">
    <location>
        <begin position="1036"/>
        <end position="1172"/>
    </location>
</feature>
<feature type="domain" description="RanBD1 2" evidence="1">
    <location>
        <begin position="1333"/>
        <end position="1469"/>
    </location>
</feature>
<feature type="domain" description="GRIP" evidence="2">
    <location>
        <begin position="1702"/>
        <end position="1752"/>
    </location>
</feature>
<feature type="region of interest" description="Disordered" evidence="3">
    <location>
        <begin position="760"/>
        <end position="804"/>
    </location>
</feature>
<feature type="region of interest" description="Disordered" evidence="3">
    <location>
        <begin position="924"/>
        <end position="945"/>
    </location>
</feature>
<feature type="region of interest" description="Disordered" evidence="3">
    <location>
        <begin position="1214"/>
        <end position="1247"/>
    </location>
</feature>
<feature type="region of interest" description="Disordered" evidence="3">
    <location>
        <begin position="1306"/>
        <end position="1330"/>
    </location>
</feature>
<feature type="region of interest" description="Disordered" evidence="3">
    <location>
        <begin position="1580"/>
        <end position="1621"/>
    </location>
</feature>
<feature type="compositionally biased region" description="Low complexity" evidence="3">
    <location>
        <begin position="778"/>
        <end position="797"/>
    </location>
</feature>
<feature type="compositionally biased region" description="Basic and acidic residues" evidence="3">
    <location>
        <begin position="931"/>
        <end position="941"/>
    </location>
</feature>
<feature type="compositionally biased region" description="Polar residues" evidence="3">
    <location>
        <begin position="1235"/>
        <end position="1244"/>
    </location>
</feature>
<feature type="compositionally biased region" description="Acidic residues" evidence="3">
    <location>
        <begin position="1317"/>
        <end position="1329"/>
    </location>
</feature>
<feature type="compositionally biased region" description="Polar residues" evidence="3">
    <location>
        <begin position="1580"/>
        <end position="1593"/>
    </location>
</feature>
<feature type="compositionally biased region" description="Basic and acidic residues" evidence="3">
    <location>
        <begin position="1594"/>
        <end position="1617"/>
    </location>
</feature>
<feature type="modified residue" description="Phosphothreonine" evidence="8">
    <location>
        <position position="19"/>
    </location>
</feature>
<feature type="modified residue" description="Phosphoserine" evidence="8 9">
    <location>
        <position position="21"/>
    </location>
</feature>
<feature type="splice variant" id="VSP_038968" description="In isoform 2." evidence="6">
    <original>VATTGPSVYYSQSPAYNSQYLLRPAANVTPTKGSSNT</original>
    <variation>EAAHRHFTIEKHGDSKWIIYRFTKQLCGTERARAKIS</variation>
    <location>
        <begin position="868"/>
        <end position="904"/>
    </location>
</feature>
<feature type="splice variant" id="VSP_038969" description="In isoform 2." evidence="6">
    <location>
        <begin position="905"/>
        <end position="1765"/>
    </location>
</feature>
<feature type="sequence conflict" description="In Ref. 1; AAB41848." evidence="7" ref="1">
    <original>L</original>
    <variation>V</variation>
    <location>
        <position position="174"/>
    </location>
</feature>
<feature type="sequence conflict" description="In Ref. 1; AAB41848." evidence="7" ref="1">
    <original>N</original>
    <variation>H</variation>
    <location>
        <position position="204"/>
    </location>
</feature>
<feature type="sequence conflict" description="In Ref. 1; AAB41848." evidence="7" ref="1">
    <original>Y</original>
    <variation>H</variation>
    <location>
        <position position="214"/>
    </location>
</feature>
<feature type="sequence conflict" description="In Ref. 1; AAB41848." evidence="7" ref="1">
    <original>Q</original>
    <variation>R</variation>
    <location>
        <position position="229"/>
    </location>
</feature>
<feature type="sequence conflict" description="In Ref. 1; AAB41848." evidence="7" ref="1">
    <original>E</original>
    <variation>G</variation>
    <location>
        <position position="257"/>
    </location>
</feature>
<feature type="sequence conflict" description="In Ref. 1; AAB41848." evidence="7" ref="1">
    <original>K</original>
    <variation>E</variation>
    <location>
        <position position="270"/>
    </location>
</feature>
<feature type="sequence conflict" description="In Ref. 1; AAB41848." evidence="7" ref="1">
    <original>L</original>
    <variation>S</variation>
    <location>
        <position position="451"/>
    </location>
</feature>
<feature type="sequence conflict" description="In Ref. 1; AAB41848." evidence="7" ref="1">
    <original>P</original>
    <variation>S</variation>
    <location>
        <position position="736"/>
    </location>
</feature>
<feature type="sequence conflict" description="In Ref. 1; AAB41848." evidence="7" ref="1">
    <original>K</original>
    <variation>R</variation>
    <location>
        <position position="784"/>
    </location>
</feature>
<feature type="sequence conflict" description="In Ref. 1; AAB41848." evidence="7" ref="1">
    <original>A</original>
    <variation>G</variation>
    <location>
        <position position="893"/>
    </location>
</feature>
<feature type="sequence conflict" description="In Ref. 1; AAB41848." evidence="7" ref="1">
    <original>E</original>
    <variation>D</variation>
    <location>
        <position position="905"/>
    </location>
</feature>
<feature type="sequence conflict" description="In Ref. 1; AAB41848." evidence="7" ref="1">
    <original>F</original>
    <variation>L</variation>
    <location>
        <position position="946"/>
    </location>
</feature>
<feature type="sequence conflict" description="In Ref. 1; AAB41848." evidence="7" ref="1">
    <original>R</original>
    <variation>S</variation>
    <location>
        <position position="1074"/>
    </location>
</feature>
<feature type="sequence conflict" description="In Ref. 1; AAB41848." evidence="7" ref="1">
    <original>D</original>
    <variation>H</variation>
    <location>
        <position position="1135"/>
    </location>
</feature>
<feature type="sequence conflict" description="In Ref. 1; AAB41848." evidence="7" ref="1">
    <original>S</original>
    <variation>P</variation>
    <location>
        <position position="1612"/>
    </location>
</feature>
<feature type="sequence conflict" description="In Ref. 1; AAB41848." evidence="7" ref="1">
    <original>L</original>
    <variation>P</variation>
    <location>
        <position position="1682"/>
    </location>
</feature>
<reference key="1">
    <citation type="journal article" date="1999" name="Arch. Androl.">
        <title>Molecular cloning and characterization of a novel testis-specific nucleoporin-related gene.</title>
        <authorList>
            <person name="Wang L.F."/>
            <person name="Zhu H.D."/>
            <person name="Miao S.Y."/>
            <person name="Cao D.F."/>
            <person name="Wu Y.W."/>
            <person name="Zong S.D."/>
            <person name="Koide S.S."/>
        </authorList>
    </citation>
    <scope>NUCLEOTIDE SEQUENCE [MRNA] (ISOFORM 1)</scope>
    <scope>TISSUE SPECIFICITY</scope>
    <source>
        <tissue>Testis</tissue>
    </source>
</reference>
<reference key="2">
    <citation type="journal article" date="2001" name="Genome Res.">
        <title>Towards a catalog of human genes and proteins: sequencing and analysis of 500 novel complete protein coding human cDNAs.</title>
        <authorList>
            <person name="Wiemann S."/>
            <person name="Weil B."/>
            <person name="Wellenreuther R."/>
            <person name="Gassenhuber J."/>
            <person name="Glassl S."/>
            <person name="Ansorge W."/>
            <person name="Boecher M."/>
            <person name="Bloecker H."/>
            <person name="Bauersachs S."/>
            <person name="Blum H."/>
            <person name="Lauber J."/>
            <person name="Duesterhoeft A."/>
            <person name="Beyer A."/>
            <person name="Koehrer K."/>
            <person name="Strack N."/>
            <person name="Mewes H.-W."/>
            <person name="Ottenwaelder B."/>
            <person name="Obermaier B."/>
            <person name="Tampe J."/>
            <person name="Heubner D."/>
            <person name="Wambutt R."/>
            <person name="Korn B."/>
            <person name="Klein M."/>
            <person name="Poustka A."/>
        </authorList>
    </citation>
    <scope>NUCLEOTIDE SEQUENCE [LARGE SCALE MRNA] (ISOFORM 2)</scope>
</reference>
<reference key="3">
    <citation type="journal article" date="2005" name="Nature">
        <title>Generation and annotation of the DNA sequences of human chromosomes 2 and 4.</title>
        <authorList>
            <person name="Hillier L.W."/>
            <person name="Graves T.A."/>
            <person name="Fulton R.S."/>
            <person name="Fulton L.A."/>
            <person name="Pepin K.H."/>
            <person name="Minx P."/>
            <person name="Wagner-McPherson C."/>
            <person name="Layman D."/>
            <person name="Wylie K."/>
            <person name="Sekhon M."/>
            <person name="Becker M.C."/>
            <person name="Fewell G.A."/>
            <person name="Delehaunty K.D."/>
            <person name="Miner T.L."/>
            <person name="Nash W.E."/>
            <person name="Kremitzki C."/>
            <person name="Oddy L."/>
            <person name="Du H."/>
            <person name="Sun H."/>
            <person name="Bradshaw-Cordum H."/>
            <person name="Ali J."/>
            <person name="Carter J."/>
            <person name="Cordes M."/>
            <person name="Harris A."/>
            <person name="Isak A."/>
            <person name="van Brunt A."/>
            <person name="Nguyen C."/>
            <person name="Du F."/>
            <person name="Courtney L."/>
            <person name="Kalicki J."/>
            <person name="Ozersky P."/>
            <person name="Abbott S."/>
            <person name="Armstrong J."/>
            <person name="Belter E.A."/>
            <person name="Caruso L."/>
            <person name="Cedroni M."/>
            <person name="Cotton M."/>
            <person name="Davidson T."/>
            <person name="Desai A."/>
            <person name="Elliott G."/>
            <person name="Erb T."/>
            <person name="Fronick C."/>
            <person name="Gaige T."/>
            <person name="Haakenson W."/>
            <person name="Haglund K."/>
            <person name="Holmes A."/>
            <person name="Harkins R."/>
            <person name="Kim K."/>
            <person name="Kruchowski S.S."/>
            <person name="Strong C.M."/>
            <person name="Grewal N."/>
            <person name="Goyea E."/>
            <person name="Hou S."/>
            <person name="Levy A."/>
            <person name="Martinka S."/>
            <person name="Mead K."/>
            <person name="McLellan M.D."/>
            <person name="Meyer R."/>
            <person name="Randall-Maher J."/>
            <person name="Tomlinson C."/>
            <person name="Dauphin-Kohlberg S."/>
            <person name="Kozlowicz-Reilly A."/>
            <person name="Shah N."/>
            <person name="Swearengen-Shahid S."/>
            <person name="Snider J."/>
            <person name="Strong J.T."/>
            <person name="Thompson J."/>
            <person name="Yoakum M."/>
            <person name="Leonard S."/>
            <person name="Pearman C."/>
            <person name="Trani L."/>
            <person name="Radionenko M."/>
            <person name="Waligorski J.E."/>
            <person name="Wang C."/>
            <person name="Rock S.M."/>
            <person name="Tin-Wollam A.-M."/>
            <person name="Maupin R."/>
            <person name="Latreille P."/>
            <person name="Wendl M.C."/>
            <person name="Yang S.-P."/>
            <person name="Pohl C."/>
            <person name="Wallis J.W."/>
            <person name="Spieth J."/>
            <person name="Bieri T.A."/>
            <person name="Berkowicz N."/>
            <person name="Nelson J.O."/>
            <person name="Osborne J."/>
            <person name="Ding L."/>
            <person name="Meyer R."/>
            <person name="Sabo A."/>
            <person name="Shotland Y."/>
            <person name="Sinha P."/>
            <person name="Wohldmann P.E."/>
            <person name="Cook L.L."/>
            <person name="Hickenbotham M.T."/>
            <person name="Eldred J."/>
            <person name="Williams D."/>
            <person name="Jones T.A."/>
            <person name="She X."/>
            <person name="Ciccarelli F.D."/>
            <person name="Izaurralde E."/>
            <person name="Taylor J."/>
            <person name="Schmutz J."/>
            <person name="Myers R.M."/>
            <person name="Cox D.R."/>
            <person name="Huang X."/>
            <person name="McPherson J.D."/>
            <person name="Mardis E.R."/>
            <person name="Clifton S.W."/>
            <person name="Warren W.C."/>
            <person name="Chinwalla A.T."/>
            <person name="Eddy S.R."/>
            <person name="Marra M.A."/>
            <person name="Ovcharenko I."/>
            <person name="Furey T.S."/>
            <person name="Miller W."/>
            <person name="Eichler E.E."/>
            <person name="Bork P."/>
            <person name="Suyama M."/>
            <person name="Torrents D."/>
            <person name="Waterston R.H."/>
            <person name="Wilson R.K."/>
        </authorList>
    </citation>
    <scope>NUCLEOTIDE SEQUENCE [LARGE SCALE GENOMIC DNA]</scope>
</reference>
<reference key="4">
    <citation type="submission" date="2005-03" db="EMBL/GenBank/DDBJ databases">
        <authorList>
            <person name="Totoki Y."/>
            <person name="Toyoda A."/>
            <person name="Takeda T."/>
            <person name="Sakaki Y."/>
            <person name="Tanaka A."/>
            <person name="Yokoyama S."/>
            <person name="Ohara O."/>
            <person name="Nagase T."/>
            <person name="Kikuno R.F."/>
        </authorList>
    </citation>
    <scope>NUCLEOTIDE SEQUENCE [LARGE SCALE MRNA] OF 1009-1765 (ISOFORM 1)</scope>
    <source>
        <tissue>Brain</tissue>
    </source>
</reference>
<reference key="5">
    <citation type="journal article" date="2005" name="Genome Res.">
        <title>Complex genomic rearrangements lead to novel primate gene function.</title>
        <authorList>
            <person name="Ciccarelli F.D."/>
            <person name="von Mering C."/>
            <person name="Suyama M."/>
            <person name="Harrington E.D."/>
            <person name="Izaurralde E."/>
            <person name="Bork P."/>
        </authorList>
    </citation>
    <scope>SUBCELLULAR LOCATION</scope>
</reference>
<reference key="6">
    <citation type="journal article" date="2008" name="J. Proteome Res.">
        <title>Combining protein-based IMAC, peptide-based IMAC, and MudPIT for efficient phosphoproteomic analysis.</title>
        <authorList>
            <person name="Cantin G.T."/>
            <person name="Yi W."/>
            <person name="Lu B."/>
            <person name="Park S.K."/>
            <person name="Xu T."/>
            <person name="Lee J.-D."/>
            <person name="Yates J.R. III"/>
        </authorList>
    </citation>
    <scope>IDENTIFICATION BY MASS SPECTROMETRY [LARGE SCALE ANALYSIS]</scope>
    <source>
        <tissue>Cervix carcinoma</tissue>
    </source>
</reference>
<reference key="7">
    <citation type="journal article" date="2008" name="Mol. Cell">
        <title>Kinase-selective enrichment enables quantitative phosphoproteomics of the kinome across the cell cycle.</title>
        <authorList>
            <person name="Daub H."/>
            <person name="Olsen J.V."/>
            <person name="Bairlein M."/>
            <person name="Gnad F."/>
            <person name="Oppermann F.S."/>
            <person name="Korner R."/>
            <person name="Greff Z."/>
            <person name="Keri G."/>
            <person name="Stemmann O."/>
            <person name="Mann M."/>
        </authorList>
    </citation>
    <scope>IDENTIFICATION BY MASS SPECTROMETRY [LARGE SCALE ANALYSIS]</scope>
    <source>
        <tissue>Cervix carcinoma</tissue>
    </source>
</reference>
<reference key="8">
    <citation type="journal article" date="2008" name="Proc. Natl. Acad. Sci. U.S.A.">
        <title>A quantitative atlas of mitotic phosphorylation.</title>
        <authorList>
            <person name="Dephoure N."/>
            <person name="Zhou C."/>
            <person name="Villen J."/>
            <person name="Beausoleil S.A."/>
            <person name="Bakalarski C.E."/>
            <person name="Elledge S.J."/>
            <person name="Gygi S.P."/>
        </authorList>
    </citation>
    <scope>PHOSPHORYLATION [LARGE SCALE ANALYSIS] AT THR-19 AND SER-21</scope>
    <scope>IDENTIFICATION BY MASS SPECTROMETRY [LARGE SCALE ANALYSIS]</scope>
    <source>
        <tissue>Cervix carcinoma</tissue>
    </source>
</reference>
<reference key="9">
    <citation type="journal article" date="2013" name="J. Proteome Res.">
        <title>Toward a comprehensive characterization of a human cancer cell phosphoproteome.</title>
        <authorList>
            <person name="Zhou H."/>
            <person name="Di Palma S."/>
            <person name="Preisinger C."/>
            <person name="Peng M."/>
            <person name="Polat A.N."/>
            <person name="Heck A.J."/>
            <person name="Mohammed S."/>
        </authorList>
    </citation>
    <scope>PHOSPHORYLATION [LARGE SCALE ANALYSIS] AT SER-21</scope>
    <scope>IDENTIFICATION BY MASS SPECTROMETRY [LARGE SCALE ANALYSIS]</scope>
    <source>
        <tissue>Cervix carcinoma</tissue>
    </source>
</reference>
<protein>
    <recommendedName>
        <fullName>RANBP2-like and GRIP domain-containing protein 5/6</fullName>
    </recommendedName>
    <alternativeName>
        <fullName>Ran-binding protein 2-like 1/2</fullName>
        <shortName>RanBP2-like 1/2</shortName>
        <shortName>RanBP2L1</shortName>
        <shortName>RanBP2L2</shortName>
    </alternativeName>
    <alternativeName>
        <fullName>Sperm membrane protein BS-63</fullName>
    </alternativeName>
</protein>
<accession>Q99666</accession>
<accession>Q53QN2</accession>
<accession>Q53T03</accession>
<accession>Q59GM7</accession>
<accession>Q9H0B2</accession>
<keyword id="KW-0025">Alternative splicing</keyword>
<keyword id="KW-0963">Cytoplasm</keyword>
<keyword id="KW-0597">Phosphoprotein</keyword>
<keyword id="KW-1267">Proteomics identification</keyword>
<keyword id="KW-1185">Reference proteome</keyword>
<keyword id="KW-0677">Repeat</keyword>
<keyword id="KW-0802">TPR repeat</keyword>
<dbReference type="EMBL" id="U64675">
    <property type="protein sequence ID" value="AAB41848.2"/>
    <property type="molecule type" value="mRNA"/>
</dbReference>
<dbReference type="EMBL" id="AL136868">
    <property type="protein sequence ID" value="CAB66802.1"/>
    <property type="molecule type" value="mRNA"/>
</dbReference>
<dbReference type="EMBL" id="AC013271">
    <property type="protein sequence ID" value="AAY14902.1"/>
    <property type="molecule type" value="Genomic_DNA"/>
</dbReference>
<dbReference type="EMBL" id="AC123886">
    <property type="protein sequence ID" value="AAY14839.1"/>
    <property type="molecule type" value="Genomic_DNA"/>
</dbReference>
<dbReference type="EMBL" id="AC108938">
    <property type="protein sequence ID" value="AAY24132.1"/>
    <property type="molecule type" value="Genomic_DNA"/>
</dbReference>
<dbReference type="EMBL" id="AC109815">
    <property type="status" value="NOT_ANNOTATED_CDS"/>
    <property type="molecule type" value="Genomic_DNA"/>
</dbReference>
<dbReference type="EMBL" id="AB209082">
    <property type="protein sequence ID" value="BAD92319.1"/>
    <property type="molecule type" value="mRNA"/>
</dbReference>
<dbReference type="CCDS" id="CCDS2082.1">
    <molecule id="Q99666-1"/>
</dbReference>
<dbReference type="CCDS" id="CCDS2083.1">
    <molecule id="Q99666-2"/>
</dbReference>
<dbReference type="CCDS" id="CCDS42729.1">
    <molecule id="Q99666-2"/>
</dbReference>
<dbReference type="CCDS" id="CCDS46388.1">
    <molecule id="Q99666-1"/>
</dbReference>
<dbReference type="RefSeq" id="NP_001032955.1">
    <molecule id="Q99666-2"/>
    <property type="nucleotide sequence ID" value="NM_001037866.1"/>
</dbReference>
<dbReference type="RefSeq" id="NP_001116835.1">
    <molecule id="Q99666-1"/>
    <property type="nucleotide sequence ID" value="NM_001123363.3"/>
</dbReference>
<dbReference type="RefSeq" id="NP_005045.2">
    <molecule id="Q99666-1"/>
    <property type="nucleotide sequence ID" value="NM_005054.3"/>
</dbReference>
<dbReference type="RefSeq" id="NP_115636.1">
    <molecule id="Q99666-2"/>
    <property type="nucleotide sequence ID" value="NM_032260.3"/>
</dbReference>
<dbReference type="SMR" id="Q99666"/>
<dbReference type="BioGRID" id="123954">
    <property type="interactions" value="152"/>
</dbReference>
<dbReference type="BioGRID" id="609938">
    <property type="interactions" value="33"/>
</dbReference>
<dbReference type="FunCoup" id="Q99666">
    <property type="interactions" value="744"/>
</dbReference>
<dbReference type="IntAct" id="Q99666">
    <property type="interactions" value="82"/>
</dbReference>
<dbReference type="MINT" id="Q99666"/>
<dbReference type="STRING" id="9606.ENSP00000016946"/>
<dbReference type="GlyGen" id="Q99666">
    <property type="glycosylation" value="2 sites, 1 O-linked glycan (2 sites)"/>
</dbReference>
<dbReference type="iPTMnet" id="Q99666"/>
<dbReference type="PhosphoSitePlus" id="Q99666"/>
<dbReference type="BioMuta" id="RGPD5"/>
<dbReference type="DMDM" id="229463026"/>
<dbReference type="jPOST" id="Q99666"/>
<dbReference type="MassIVE" id="Q99666"/>
<dbReference type="PaxDb" id="9606-ENSP00000016946"/>
<dbReference type="PeptideAtlas" id="Q99666"/>
<dbReference type="ProteomicsDB" id="78386">
    <molecule id="Q99666-1"/>
</dbReference>
<dbReference type="ProteomicsDB" id="78387">
    <molecule id="Q99666-2"/>
</dbReference>
<dbReference type="Pumba" id="Q99666"/>
<dbReference type="Antibodypedia" id="33171">
    <property type="antibodies" value="67 antibodies from 23 providers"/>
</dbReference>
<dbReference type="Antibodypedia" id="58593">
    <property type="antibodies" value="9 antibodies from 2 providers"/>
</dbReference>
<dbReference type="DNASU" id="84220"/>
<dbReference type="Ensembl" id="ENST00000016946.8">
    <molecule id="Q99666-1"/>
    <property type="protein sequence ID" value="ENSP00000016946.3"/>
    <property type="gene ID" value="ENSG00000015568.13"/>
</dbReference>
<dbReference type="Ensembl" id="ENST00000272454.10">
    <molecule id="Q99666-2"/>
    <property type="protein sequence ID" value="ENSP00000272454.6"/>
    <property type="gene ID" value="ENSG00000015568.13"/>
</dbReference>
<dbReference type="Ensembl" id="ENST00000329516.8">
    <molecule id="Q99666-1"/>
    <property type="protein sequence ID" value="ENSP00000330842.3"/>
    <property type="gene ID" value="ENSG00000183054.13"/>
</dbReference>
<dbReference type="Ensembl" id="ENST00000330331.9">
    <molecule id="Q99666-2"/>
    <property type="protein sequence ID" value="ENSP00000330023.5"/>
    <property type="gene ID" value="ENSG00000183054.13"/>
</dbReference>
<dbReference type="Ensembl" id="ENST00000393283.5">
    <molecule id="Q99666-2"/>
    <property type="protein sequence ID" value="ENSP00000376962.1"/>
    <property type="gene ID" value="ENSG00000015568.13"/>
</dbReference>
<dbReference type="GeneID" id="729540"/>
<dbReference type="GeneID" id="84220"/>
<dbReference type="KEGG" id="hsa:729540"/>
<dbReference type="KEGG" id="hsa:84220"/>
<dbReference type="MANE-Select" id="ENST00000016946.8">
    <property type="protein sequence ID" value="ENSP00000016946.3"/>
    <property type="RefSeq nucleotide sequence ID" value="NM_005054.3"/>
    <property type="RefSeq protein sequence ID" value="NP_005045.2"/>
</dbReference>
<dbReference type="MANE-Select" id="ENST00000329516.8">
    <property type="protein sequence ID" value="ENSP00000330842.3"/>
    <property type="RefSeq nucleotide sequence ID" value="NM_001123363.4"/>
    <property type="RefSeq protein sequence ID" value="NP_001116835.1"/>
</dbReference>
<dbReference type="UCSC" id="uc002tfc.3">
    <molecule id="Q99666-1"/>
    <property type="organism name" value="human"/>
</dbReference>
<dbReference type="AGR" id="HGNC:32418"/>
<dbReference type="AGR" id="HGNC:32419"/>
<dbReference type="CTD" id="729540"/>
<dbReference type="CTD" id="84220"/>
<dbReference type="DisGeNET" id="729540"/>
<dbReference type="GeneCards" id="RGPD5"/>
<dbReference type="GeneCards" id="RGPD6"/>
<dbReference type="HGNC" id="HGNC:32418">
    <property type="gene designation" value="RGPD5"/>
</dbReference>
<dbReference type="HGNC" id="HGNC:32419">
    <property type="gene designation" value="RGPD6"/>
</dbReference>
<dbReference type="HPA" id="ENSG00000015568">
    <property type="expression patterns" value="Low tissue specificity"/>
</dbReference>
<dbReference type="HPA" id="ENSG00000183054">
    <property type="expression patterns" value="Low tissue specificity"/>
</dbReference>
<dbReference type="MIM" id="612708">
    <property type="type" value="gene"/>
</dbReference>
<dbReference type="MIM" id="612709">
    <property type="type" value="gene"/>
</dbReference>
<dbReference type="MIM" id="612710">
    <property type="type" value="gene"/>
</dbReference>
<dbReference type="neXtProt" id="NX_Q99666"/>
<dbReference type="OpenTargets" id="ENSG00000015568"/>
<dbReference type="PharmGKB" id="PA142671074"/>
<dbReference type="VEuPathDB" id="HostDB:ENSG00000015568"/>
<dbReference type="VEuPathDB" id="HostDB:ENSG00000183054"/>
<dbReference type="eggNOG" id="KOG0864">
    <property type="taxonomic scope" value="Eukaryota"/>
</dbReference>
<dbReference type="GeneTree" id="ENSGT00940000164065"/>
<dbReference type="HOGENOM" id="CLU_022433_0_0_1"/>
<dbReference type="InParanoid" id="Q99666"/>
<dbReference type="OMA" id="QGCYLSN"/>
<dbReference type="OrthoDB" id="9523654at2759"/>
<dbReference type="PAN-GO" id="Q99666">
    <property type="GO annotations" value="4 GO annotations based on evolutionary models"/>
</dbReference>
<dbReference type="PhylomeDB" id="Q99666"/>
<dbReference type="TreeFam" id="TF314797"/>
<dbReference type="PathwayCommons" id="Q99666"/>
<dbReference type="SignaLink" id="Q99666"/>
<dbReference type="BioGRID-ORCS" id="729540">
    <property type="hits" value="703 hits in 987 CRISPR screens"/>
</dbReference>
<dbReference type="BioGRID-ORCS" id="84220">
    <property type="hits" value="34 hits in 297 CRISPR screens"/>
</dbReference>
<dbReference type="ChiTaRS" id="RGPD5">
    <property type="organism name" value="human"/>
</dbReference>
<dbReference type="ChiTaRS" id="RGPD6">
    <property type="organism name" value="human"/>
</dbReference>
<dbReference type="GeneWiki" id="RGPD5"/>
<dbReference type="Pharos" id="Q99666">
    <property type="development level" value="Tdark"/>
</dbReference>
<dbReference type="PRO" id="PR:Q99666"/>
<dbReference type="Proteomes" id="UP000005640">
    <property type="component" value="Chromosome 2"/>
</dbReference>
<dbReference type="RNAct" id="Q99666">
    <property type="molecule type" value="protein"/>
</dbReference>
<dbReference type="Bgee" id="ENSG00000015568">
    <property type="expression patterns" value="Expressed in calcaneal tendon and 182 other cell types or tissues"/>
</dbReference>
<dbReference type="ExpressionAtlas" id="Q99666">
    <property type="expression patterns" value="baseline and differential"/>
</dbReference>
<dbReference type="GO" id="GO:0005737">
    <property type="term" value="C:cytoplasm"/>
    <property type="evidence" value="ECO:0000318"/>
    <property type="project" value="GO_Central"/>
</dbReference>
<dbReference type="GO" id="GO:0005643">
    <property type="term" value="C:nuclear pore"/>
    <property type="evidence" value="ECO:0000318"/>
    <property type="project" value="GO_Central"/>
</dbReference>
<dbReference type="GO" id="GO:0006607">
    <property type="term" value="P:NLS-bearing protein import into nucleus"/>
    <property type="evidence" value="ECO:0000318"/>
    <property type="project" value="GO_Central"/>
</dbReference>
<dbReference type="CDD" id="cd13177">
    <property type="entry name" value="RanBD2_RanBP2-like"/>
    <property type="match status" value="1"/>
</dbReference>
<dbReference type="CDD" id="cd14685">
    <property type="entry name" value="RanBD3_RanBP2-like"/>
    <property type="match status" value="1"/>
</dbReference>
<dbReference type="FunFam" id="2.30.29.30:FF:000018">
    <property type="entry name" value="E3 SUMO-protein ligase RanBP2"/>
    <property type="match status" value="2"/>
</dbReference>
<dbReference type="FunFam" id="1.25.40.10:FF:000114">
    <property type="entry name" value="E3 SUMO-protein ligase RanBP2 isoform X1"/>
    <property type="match status" value="1"/>
</dbReference>
<dbReference type="FunFam" id="1.10.220.60:FF:000003">
    <property type="entry name" value="GRIP and coiled-coil domain-containing protein 2"/>
    <property type="match status" value="1"/>
</dbReference>
<dbReference type="Gene3D" id="1.10.220.60">
    <property type="entry name" value="GRIP domain"/>
    <property type="match status" value="1"/>
</dbReference>
<dbReference type="Gene3D" id="2.30.29.30">
    <property type="entry name" value="Pleckstrin-homology domain (PH domain)/Phosphotyrosine-binding domain (PTB)"/>
    <property type="match status" value="2"/>
</dbReference>
<dbReference type="Gene3D" id="1.25.40.10">
    <property type="entry name" value="Tetratricopeptide repeat domain"/>
    <property type="match status" value="1"/>
</dbReference>
<dbReference type="InterPro" id="IPR032023">
    <property type="entry name" value="GCC2_Rab_bind"/>
</dbReference>
<dbReference type="InterPro" id="IPR000237">
    <property type="entry name" value="GRIP_dom"/>
</dbReference>
<dbReference type="InterPro" id="IPR011993">
    <property type="entry name" value="PH-like_dom_sf"/>
</dbReference>
<dbReference type="InterPro" id="IPR000156">
    <property type="entry name" value="Ran_bind_dom"/>
</dbReference>
<dbReference type="InterPro" id="IPR045255">
    <property type="entry name" value="RanBP1-like"/>
</dbReference>
<dbReference type="InterPro" id="IPR011990">
    <property type="entry name" value="TPR-like_helical_dom_sf"/>
</dbReference>
<dbReference type="InterPro" id="IPR019734">
    <property type="entry name" value="TPR_rpt"/>
</dbReference>
<dbReference type="PANTHER" id="PTHR23138:SF175">
    <property type="entry name" value="E3 SUMO-PROTEIN LIGASE RANBP2-RELATED"/>
    <property type="match status" value="1"/>
</dbReference>
<dbReference type="PANTHER" id="PTHR23138">
    <property type="entry name" value="RAN BINDING PROTEIN"/>
    <property type="match status" value="1"/>
</dbReference>
<dbReference type="Pfam" id="PF01465">
    <property type="entry name" value="GRIP"/>
    <property type="match status" value="1"/>
</dbReference>
<dbReference type="Pfam" id="PF16704">
    <property type="entry name" value="Rab_bind"/>
    <property type="match status" value="1"/>
</dbReference>
<dbReference type="Pfam" id="PF00638">
    <property type="entry name" value="Ran_BP1"/>
    <property type="match status" value="2"/>
</dbReference>
<dbReference type="SMART" id="SM00755">
    <property type="entry name" value="Grip"/>
    <property type="match status" value="1"/>
</dbReference>
<dbReference type="SMART" id="SM00160">
    <property type="entry name" value="RanBD"/>
    <property type="match status" value="2"/>
</dbReference>
<dbReference type="SMART" id="SM00028">
    <property type="entry name" value="TPR"/>
    <property type="match status" value="1"/>
</dbReference>
<dbReference type="SUPFAM" id="SSF50729">
    <property type="entry name" value="PH domain-like"/>
    <property type="match status" value="2"/>
</dbReference>
<dbReference type="SUPFAM" id="SSF48452">
    <property type="entry name" value="TPR-like"/>
    <property type="match status" value="1"/>
</dbReference>
<dbReference type="PROSITE" id="PS50913">
    <property type="entry name" value="GRIP"/>
    <property type="match status" value="1"/>
</dbReference>
<dbReference type="PROSITE" id="PS50196">
    <property type="entry name" value="RANBD1"/>
    <property type="match status" value="2"/>
</dbReference>
<dbReference type="PROSITE" id="PS50005">
    <property type="entry name" value="TPR"/>
    <property type="match status" value="1"/>
</dbReference>
<dbReference type="PROSITE" id="PS50293">
    <property type="entry name" value="TPR_REGION"/>
    <property type="match status" value="1"/>
</dbReference>
<sequence length="1765" mass="198924">MRRSKADVERYVASVLGLTPSPRQKSMKGFYFAKLYYEAKEYDLAKKYICTYINVQERDPKAHRFLGLLYELEENTEKAVECYRRSVELNPTQKDLVLKIAELLCKNDVTDGRAKYWVERAAKLFPGSPAIYKLKEQLLDCEGEDGWNKLFDLIQSELYVRPDDVHVNIRLVELYRSTKRLKDAVAHCHEAERNIALRSSLEWNSCVVQTLKEYLESLQCLESDKSDWQATNTDLLLAYANLMLLTLSTRDVQENRELLESFDSALQSAKSSLGGNDELSATFLEMKGHFYMYAGSLLLKMGQHGNNVQWRALSELAALCYLIAFQVPRPKIKLREGKAGQNLLEMMACDRLSQSGHMLLSLSRGKQDFLKEVVETFANKIGQSALYDALFSSQSPKDTSFLGSDDIGKIDVQEPELEDLARYDVGAIRAHNGSLQHLTWLGLQWNSLPALPGIRKWLKQLFHRLPHETSRLETNAPESICILDLEVFLLGVVYTSHLQLKEKCNSHHSSYQPLCLPFPVCKQLCTERQKSWWDAVCTLIHRKAVPGNLAKLRLLVQHEINTLRAQEKHGLQPALLVHWAKYLQKTGSGLNSFYGQLEYIGRSVHYWKKVLPLLKIIKKNSIPEPIDPLFKHFHSVDIQASEIVEYEEDAHITFAMLDAVNGNIEDAVTAFESIKSVVSYWNLALIFHRKAEDIENDALSPEEQEECRNYLTKTRDYLIKIIDDGDSNLSVVKKLPVPLESVKQMLNSVMQELEDYSEGGPLYKNGSLRNADSEIKHSTPSPTKYSLSPSKSYKYSPETPPRWTEDRNSLLNMICQQVEAIKKEMQELKLNSSKSASRHRWPTENYGPDSVPDGYQGSQTFHGAPLTVATTGPSVYYSQSPAYNSQYLLRPAANVTPTKGSSNTEFKSTKEGFSIPVSADGFKFGISEPGNQEKKREKPLENDTGFQAQDISGRKKGRGVIFGQTSSTFTFADVAKSTSGEGFQFGKKDLNFKGFSGAGEKLFSSRYGKMANKANTSGDFEKDDDAYKTEDSDDIHFEPVVQMPEKVELVTGEEGEKVLYSQGVKLFRFDAEVRQWKERGLGNLKILKNEVNGKLRMLMRREQVLKVCANHWITTTMNLKPLSGSDRAWMWSASDFSDGDAKLERLAAKFKTPELAEEFKQKFEECQRLLLDIPLQTPHKLVDTGRAAKLIQRAEEMKSGLKDFKTFLTNDQTKVTEEENKGSGTGAAGASDTTIKPNAENTGPTLEWDNYDLREDALDDSVSSSSVHASPLASSPVRKNLFRFDESTTGSNFSFKSALSLSKSPAKLNQSGTSVGTDEESVVTQEEERDGQYFEPVVPLPDLVEVSSGEENEQVVFSHRAEIYRYDKDVGQWKERGIGDIKILQNYDNKQVRIVMRRDQVLKLCANHRITPDMSLQNMKGTERVWVWTACDFADGERKVEHLAVRFKLQDVADSFKKIFDEAKTAQEKDSLITPHVSRSSTPRESPCGKIAVAILEETTRERTDVIQGDDVADAASEVEVSSTSETTTKAVVSPPKFVFVSESVKRIFSSEKSKPFVFGNSSATGSLFGFSFNAPLKSNNSETSSVAQSGSESKVEPKKCELSKNSDIEQSSDSKVKNLSASFPTEESSINYTFKTPEKEPPLWHAEFTKEELVQKLRSTTKSADHLNGLLREIEATNAVLMEQIKLLKSEIRRLERNQEREKSAANLEYLKNVLLQFIFLKPGSERERLLPVINTMLQLSPEEKGKLAAVAQDEEENASRSSG</sequence>